<feature type="chain" id="PRO_0000170763" description="Isoprimeverose transporter">
    <location>
        <begin position="1"/>
        <end position="479"/>
    </location>
</feature>
<feature type="transmembrane region" description="Helical" evidence="1">
    <location>
        <begin position="54"/>
        <end position="74"/>
    </location>
</feature>
<feature type="transmembrane region" description="Helical" evidence="1">
    <location>
        <begin position="102"/>
        <end position="122"/>
    </location>
</feature>
<feature type="transmembrane region" description="Helical" evidence="1">
    <location>
        <begin position="131"/>
        <end position="151"/>
    </location>
</feature>
<feature type="transmembrane region" description="Helical" evidence="1">
    <location>
        <begin position="174"/>
        <end position="194"/>
    </location>
</feature>
<feature type="transmembrane region" description="Helical" evidence="1">
    <location>
        <begin position="205"/>
        <end position="225"/>
    </location>
</feature>
<feature type="transmembrane region" description="Helical" evidence="1">
    <location>
        <begin position="253"/>
        <end position="273"/>
    </location>
</feature>
<feature type="transmembrane region" description="Helical" evidence="1">
    <location>
        <begin position="289"/>
        <end position="309"/>
    </location>
</feature>
<feature type="transmembrane region" description="Helical" evidence="1">
    <location>
        <begin position="321"/>
        <end position="341"/>
    </location>
</feature>
<feature type="transmembrane region" description="Helical" evidence="1">
    <location>
        <begin position="348"/>
        <end position="368"/>
    </location>
</feature>
<feature type="transmembrane region" description="Helical" evidence="1">
    <location>
        <begin position="397"/>
        <end position="417"/>
    </location>
</feature>
<feature type="transmembrane region" description="Helical" evidence="1">
    <location>
        <begin position="431"/>
        <end position="451"/>
    </location>
</feature>
<comment type="function">
    <text evidence="2 3">Involved in the metabolism of isoprimeverose (PubMed:9573180, PubMed:9683504). Transports isoprimeverose into the cell. Transport is driven by the proton motive force generated by malolactic fermentation. Cannot transport D-xylose (PubMed:9683504).</text>
</comment>
<comment type="subcellular location">
    <subcellularLocation>
        <location evidence="6">Cell membrane</location>
        <topology evidence="1">Multi-pass membrane protein</topology>
    </subcellularLocation>
</comment>
<comment type="induction">
    <text evidence="2">Expression is negatively regulated by XylR and is subject to CcpA-dependent catabolite repression.</text>
</comment>
<comment type="disruption phenotype">
    <text evidence="2">XylP-xylQ double mutant retains the ability to ferment xylose but is impaired in its ability to ferment isoprimeverose.</text>
</comment>
<comment type="similarity">
    <text evidence="6">Belongs to the sodium:galactoside symporter (TC 2.A.2) family.</text>
</comment>
<sequence length="479" mass="52506">MSVSMQHHSSEASPATQPASVIHKNMVPWSERFSYSLSDFACNLSFSLVSTYLMFFYTDVFGISAAIVGTLFLVARIVDAFDGPFWGIMIDHTHTRWGKSRPYWLWFAIPFAVFSVLCFTVPNMSTGMKVVWAYVTYIGVDVLYSAVNIPITSILPSLTSNPQERVTLSTIRQFMGTLGATIISTIALPLVAYFGGGSTSSAHGWFMVALIMAVIAMVIFFIVFANTKERVQTVQSKKSIPIKTSLKALKRNWPWVIVIFINFIYWLGMQTRSQVTVYFFKYNMHDATLASFILGLQLVALLAVVITPWTAKRIGKRNTMLMGMLLAIVGQLILWGGSKALNVPTITVGTIVGYLGTGFVSGLIAVMLADSVDYGEWKNGVRAEGIVTSFSSFSAKFGMGIGGAVTGLILSAGGYVANHAQSAQALNAIEMNYVWVPIVGFGLSAIALLFYKVDKIEPKMLADLEQKHAQENALADDQK</sequence>
<reference key="1">
    <citation type="journal article" date="1998" name="J. Bacteriol.">
        <title>Cloning, sequence analysis, and characterization of the genes involved in isoprimeverose metabolism in Lactobacillus pentosus.</title>
        <authorList>
            <person name="Chaillou S."/>
            <person name="Lokman B.C."/>
            <person name="Leer R.J."/>
            <person name="Posthuma C."/>
            <person name="Postma P.W."/>
            <person name="Pouwels P.H."/>
        </authorList>
    </citation>
    <scope>NUCLEOTIDE SEQUENCE [GENOMIC DNA]</scope>
    <scope>FUNCTION</scope>
    <scope>INDUCTION</scope>
    <scope>DISRUPTION PHENOTYPE</scope>
    <source>
        <strain>MD353</strain>
    </source>
</reference>
<reference key="2">
    <citation type="submission" date="1998-10" db="EMBL/GenBank/DDBJ databases">
        <authorList>
            <person name="Chaillou S."/>
            <person name="Lokman B.C."/>
            <person name="Leer R.J."/>
            <person name="Posthuma C."/>
            <person name="Postma P.W."/>
            <person name="Pouwels P.H."/>
        </authorList>
    </citation>
    <scope>SEQUENCE REVISION</scope>
</reference>
<reference key="3">
    <citation type="journal article" date="1998" name="J. Bacteriol.">
        <title>Functional expression in Lactobacillus plantarum of xylP encoding the isoprimeverose transporter of Lactobacillus pentosus.</title>
        <authorList>
            <person name="Chaillou S."/>
            <person name="Postma P.W."/>
            <person name="Pouwels P.H."/>
        </authorList>
    </citation>
    <scope>FUNCTION AS A SYMPORTER</scope>
</reference>
<keyword id="KW-1003">Cell membrane</keyword>
<keyword id="KW-0472">Membrane</keyword>
<keyword id="KW-0762">Sugar transport</keyword>
<keyword id="KW-0769">Symport</keyword>
<keyword id="KW-0812">Transmembrane</keyword>
<keyword id="KW-1133">Transmembrane helix</keyword>
<keyword id="KW-0813">Transport</keyword>
<dbReference type="EMBL" id="U89276">
    <property type="protein sequence ID" value="AAC62250.1"/>
    <property type="molecule type" value="Genomic_DNA"/>
</dbReference>
<dbReference type="SMR" id="P96792"/>
<dbReference type="STRING" id="1589.GCA_001188985_00555"/>
<dbReference type="TCDB" id="2.A.2.3.3">
    <property type="family name" value="the glycoside-pentoside-hexuronide (gph):cation symporter family"/>
</dbReference>
<dbReference type="GO" id="GO:0005886">
    <property type="term" value="C:plasma membrane"/>
    <property type="evidence" value="ECO:0007669"/>
    <property type="project" value="UniProtKB-SubCell"/>
</dbReference>
<dbReference type="GO" id="GO:0015144">
    <property type="term" value="F:carbohydrate transmembrane transporter activity"/>
    <property type="evidence" value="ECO:0000314"/>
    <property type="project" value="UniProtKB"/>
</dbReference>
<dbReference type="GO" id="GO:0015294">
    <property type="term" value="F:solute:monoatomic cation symporter activity"/>
    <property type="evidence" value="ECO:0000314"/>
    <property type="project" value="UniProtKB"/>
</dbReference>
<dbReference type="GO" id="GO:0034219">
    <property type="term" value="P:carbohydrate transmembrane transport"/>
    <property type="evidence" value="ECO:0000314"/>
    <property type="project" value="UniProtKB"/>
</dbReference>
<dbReference type="GO" id="GO:0006814">
    <property type="term" value="P:sodium ion transport"/>
    <property type="evidence" value="ECO:0007669"/>
    <property type="project" value="InterPro"/>
</dbReference>
<dbReference type="CDD" id="cd17332">
    <property type="entry name" value="MFS_MelB_like"/>
    <property type="match status" value="1"/>
</dbReference>
<dbReference type="Gene3D" id="1.20.1250.20">
    <property type="entry name" value="MFS general substrate transporter like domains"/>
    <property type="match status" value="1"/>
</dbReference>
<dbReference type="InterPro" id="IPR039672">
    <property type="entry name" value="MFS_2"/>
</dbReference>
<dbReference type="InterPro" id="IPR020846">
    <property type="entry name" value="MFS_dom"/>
</dbReference>
<dbReference type="InterPro" id="IPR036259">
    <property type="entry name" value="MFS_trans_sf"/>
</dbReference>
<dbReference type="InterPro" id="IPR001927">
    <property type="entry name" value="Na/Gal_symport"/>
</dbReference>
<dbReference type="InterPro" id="IPR018043">
    <property type="entry name" value="Na/Gal_symport_CS"/>
</dbReference>
<dbReference type="NCBIfam" id="TIGR00792">
    <property type="entry name" value="gph"/>
    <property type="match status" value="1"/>
</dbReference>
<dbReference type="PANTHER" id="PTHR11328:SF24">
    <property type="entry name" value="MAJOR FACILITATOR SUPERFAMILY (MFS) PROFILE DOMAIN-CONTAINING PROTEIN"/>
    <property type="match status" value="1"/>
</dbReference>
<dbReference type="PANTHER" id="PTHR11328">
    <property type="entry name" value="MAJOR FACILITATOR SUPERFAMILY DOMAIN-CONTAINING PROTEIN"/>
    <property type="match status" value="1"/>
</dbReference>
<dbReference type="Pfam" id="PF13347">
    <property type="entry name" value="MFS_2"/>
    <property type="match status" value="1"/>
</dbReference>
<dbReference type="SUPFAM" id="SSF103473">
    <property type="entry name" value="MFS general substrate transporter"/>
    <property type="match status" value="1"/>
</dbReference>
<dbReference type="PROSITE" id="PS50850">
    <property type="entry name" value="MFS"/>
    <property type="match status" value="1"/>
</dbReference>
<dbReference type="PROSITE" id="PS00872">
    <property type="entry name" value="NA_GALACTOSIDE_SYMP"/>
    <property type="match status" value="1"/>
</dbReference>
<protein>
    <recommendedName>
        <fullName evidence="5">Isoprimeverose transporter</fullName>
    </recommendedName>
    <alternativeName>
        <fullName evidence="5">Isoprimeverose cation symporter</fullName>
    </alternativeName>
</protein>
<name>XYLP_LACPE</name>
<gene>
    <name evidence="4" type="primary">xylP</name>
</gene>
<accession>P96792</accession>
<organism>
    <name type="scientific">Lactiplantibacillus pentosus</name>
    <name type="common">Lactobacillus pentosus</name>
    <dbReference type="NCBI Taxonomy" id="1589"/>
    <lineage>
        <taxon>Bacteria</taxon>
        <taxon>Bacillati</taxon>
        <taxon>Bacillota</taxon>
        <taxon>Bacilli</taxon>
        <taxon>Lactobacillales</taxon>
        <taxon>Lactobacillaceae</taxon>
        <taxon>Lactiplantibacillus</taxon>
    </lineage>
</organism>
<proteinExistence type="evidence at protein level"/>
<evidence type="ECO:0000255" key="1"/>
<evidence type="ECO:0000269" key="2">
    <source>
    </source>
</evidence>
<evidence type="ECO:0000269" key="3">
    <source>
    </source>
</evidence>
<evidence type="ECO:0000303" key="4">
    <source>
    </source>
</evidence>
<evidence type="ECO:0000303" key="5">
    <source>
    </source>
</evidence>
<evidence type="ECO:0000305" key="6"/>